<keyword id="KW-0963">Cytoplasm</keyword>
<keyword id="KW-0694">RNA-binding</keyword>
<accession>B2I6G4</accession>
<evidence type="ECO:0000255" key="1">
    <source>
        <dbReference type="HAMAP-Rule" id="MF_00023"/>
    </source>
</evidence>
<evidence type="ECO:0000256" key="2">
    <source>
        <dbReference type="SAM" id="MobiDB-lite"/>
    </source>
</evidence>
<organism>
    <name type="scientific">Xylella fastidiosa (strain M23)</name>
    <dbReference type="NCBI Taxonomy" id="405441"/>
    <lineage>
        <taxon>Bacteria</taxon>
        <taxon>Pseudomonadati</taxon>
        <taxon>Pseudomonadota</taxon>
        <taxon>Gammaproteobacteria</taxon>
        <taxon>Lysobacterales</taxon>
        <taxon>Lysobacteraceae</taxon>
        <taxon>Xylella</taxon>
    </lineage>
</organism>
<gene>
    <name evidence="1" type="primary">smpB</name>
    <name type="ordered locus">XfasM23_1463</name>
</gene>
<protein>
    <recommendedName>
        <fullName evidence="1">SsrA-binding protein</fullName>
    </recommendedName>
    <alternativeName>
        <fullName evidence="1">Small protein B</fullName>
    </alternativeName>
</protein>
<feature type="chain" id="PRO_1000090203" description="SsrA-binding protein">
    <location>
        <begin position="1"/>
        <end position="167"/>
    </location>
</feature>
<feature type="region of interest" description="Disordered" evidence="2">
    <location>
        <begin position="139"/>
        <end position="167"/>
    </location>
</feature>
<feature type="compositionally biased region" description="Basic and acidic residues" evidence="2">
    <location>
        <begin position="144"/>
        <end position="158"/>
    </location>
</feature>
<sequence length="167" mass="19393">MNNKHPKNKAKSTTTPKTIALNKRARHEYHLIERHEAGLELQGWEVKAIRAGRANLGDGYAYVRDGEIFLIGAQITPLIQASTHVVANDRRTRKLLLHRHQIDTLIGRVQREGFTLVPTAMYWSKNRVKMEIALAKGKQAHDKRHAEKEREWQRDKQRIMRAHNRNA</sequence>
<name>SSRP_XYLF2</name>
<comment type="function">
    <text evidence="1">Required for rescue of stalled ribosomes mediated by trans-translation. Binds to transfer-messenger RNA (tmRNA), required for stable association of tmRNA with ribosomes. tmRNA and SmpB together mimic tRNA shape, replacing the anticodon stem-loop with SmpB. tmRNA is encoded by the ssrA gene; the 2 termini fold to resemble tRNA(Ala) and it encodes a 'tag peptide', a short internal open reading frame. During trans-translation Ala-aminoacylated tmRNA acts like a tRNA, entering the A-site of stalled ribosomes, displacing the stalled mRNA. The ribosome then switches to translate the ORF on the tmRNA; the nascent peptide is terminated with the 'tag peptide' encoded by the tmRNA and targeted for degradation. The ribosome is freed to recommence translation, which seems to be the essential function of trans-translation.</text>
</comment>
<comment type="subcellular location">
    <subcellularLocation>
        <location evidence="1">Cytoplasm</location>
    </subcellularLocation>
    <text evidence="1">The tmRNA-SmpB complex associates with stalled 70S ribosomes.</text>
</comment>
<comment type="similarity">
    <text evidence="1">Belongs to the SmpB family.</text>
</comment>
<dbReference type="EMBL" id="CP001011">
    <property type="protein sequence ID" value="ACB92874.1"/>
    <property type="molecule type" value="Genomic_DNA"/>
</dbReference>
<dbReference type="RefSeq" id="WP_004091039.1">
    <property type="nucleotide sequence ID" value="NC_010577.1"/>
</dbReference>
<dbReference type="SMR" id="B2I6G4"/>
<dbReference type="GeneID" id="93905195"/>
<dbReference type="KEGG" id="xfn:XfasM23_1463"/>
<dbReference type="HOGENOM" id="CLU_108953_3_0_6"/>
<dbReference type="Proteomes" id="UP000001698">
    <property type="component" value="Chromosome"/>
</dbReference>
<dbReference type="GO" id="GO:0005829">
    <property type="term" value="C:cytosol"/>
    <property type="evidence" value="ECO:0007669"/>
    <property type="project" value="TreeGrafter"/>
</dbReference>
<dbReference type="GO" id="GO:0003723">
    <property type="term" value="F:RNA binding"/>
    <property type="evidence" value="ECO:0007669"/>
    <property type="project" value="UniProtKB-UniRule"/>
</dbReference>
<dbReference type="GO" id="GO:0070929">
    <property type="term" value="P:trans-translation"/>
    <property type="evidence" value="ECO:0007669"/>
    <property type="project" value="UniProtKB-UniRule"/>
</dbReference>
<dbReference type="CDD" id="cd09294">
    <property type="entry name" value="SmpB"/>
    <property type="match status" value="1"/>
</dbReference>
<dbReference type="Gene3D" id="2.40.280.10">
    <property type="match status" value="1"/>
</dbReference>
<dbReference type="HAMAP" id="MF_00023">
    <property type="entry name" value="SmpB"/>
    <property type="match status" value="1"/>
</dbReference>
<dbReference type="InterPro" id="IPR023620">
    <property type="entry name" value="SmpB"/>
</dbReference>
<dbReference type="InterPro" id="IPR000037">
    <property type="entry name" value="SsrA-bd_prot"/>
</dbReference>
<dbReference type="InterPro" id="IPR020081">
    <property type="entry name" value="SsrA-bd_prot_CS"/>
</dbReference>
<dbReference type="NCBIfam" id="NF003843">
    <property type="entry name" value="PRK05422.1"/>
    <property type="match status" value="1"/>
</dbReference>
<dbReference type="NCBIfam" id="TIGR00086">
    <property type="entry name" value="smpB"/>
    <property type="match status" value="1"/>
</dbReference>
<dbReference type="PANTHER" id="PTHR30308:SF2">
    <property type="entry name" value="SSRA-BINDING PROTEIN"/>
    <property type="match status" value="1"/>
</dbReference>
<dbReference type="PANTHER" id="PTHR30308">
    <property type="entry name" value="TMRNA-BINDING COMPONENT OF TRANS-TRANSLATION TAGGING COMPLEX"/>
    <property type="match status" value="1"/>
</dbReference>
<dbReference type="Pfam" id="PF01668">
    <property type="entry name" value="SmpB"/>
    <property type="match status" value="1"/>
</dbReference>
<dbReference type="SUPFAM" id="SSF74982">
    <property type="entry name" value="Small protein B (SmpB)"/>
    <property type="match status" value="1"/>
</dbReference>
<dbReference type="PROSITE" id="PS01317">
    <property type="entry name" value="SSRP"/>
    <property type="match status" value="1"/>
</dbReference>
<proteinExistence type="inferred from homology"/>
<reference key="1">
    <citation type="journal article" date="2010" name="J. Bacteriol.">
        <title>Whole genome sequences of two Xylella fastidiosa strains (M12 and M23) causing almond leaf scorch disease in California.</title>
        <authorList>
            <person name="Chen J."/>
            <person name="Xie G."/>
            <person name="Han S."/>
            <person name="Chertkov O."/>
            <person name="Sims D."/>
            <person name="Civerolo E.L."/>
        </authorList>
    </citation>
    <scope>NUCLEOTIDE SEQUENCE [LARGE SCALE GENOMIC DNA]</scope>
    <source>
        <strain>M23</strain>
    </source>
</reference>